<accession>P00693</accession>
<protein>
    <recommendedName>
        <fullName>Alpha-amylase type A isozyme</fullName>
        <ecNumber evidence="2 4 6 7">3.2.1.1</ecNumber>
    </recommendedName>
    <alternativeName>
        <fullName>1,4-alpha-D-glucan glucanohydrolase</fullName>
    </alternativeName>
    <alternativeName>
        <fullName>HvAMY1</fullName>
    </alternativeName>
    <alternativeName>
        <fullName>Low pI alpha-amylase</fullName>
    </alternativeName>
</protein>
<name>AMY1_HORVU</name>
<comment type="function">
    <text evidence="6">Alpha-amylase displaying a robust amylolytic activity toward p-nitrophenyl maltoheptaoside (BPNP-G7), amylopectin and beta-limit dextrin (PubMed:24089528).</text>
</comment>
<comment type="catalytic activity">
    <reaction evidence="2 4 6 7">
        <text>Endohydrolysis of (1-&gt;4)-alpha-D-glucosidic linkages in polysaccharides containing three or more (1-&gt;4)-alpha-linked D-glucose units.</text>
        <dbReference type="EC" id="3.2.1.1"/>
    </reaction>
</comment>
<comment type="cofactor">
    <cofactor evidence="1 2 3 4">
        <name>Ca(2+)</name>
        <dbReference type="ChEBI" id="CHEBI:29108"/>
    </cofactor>
    <text evidence="1 2 3 4">Binds 3 Ca(2+) ions per subunit.</text>
</comment>
<comment type="activity regulation">
    <text evidence="6">Redox-insensitive.</text>
</comment>
<comment type="biophysicochemical properties">
    <phDependence>
        <text evidence="6">Optimum pH is 5.5 with p-nitrophenyl maltoheptaoside or amylopectin as substrate.</text>
    </phDependence>
</comment>
<comment type="subunit">
    <text evidence="1 3">Monomer.</text>
</comment>
<comment type="subcellular location">
    <subcellularLocation>
        <location>Secreted</location>
        <location>Extracellular space</location>
    </subcellularLocation>
</comment>
<comment type="developmental stage">
    <text>Production of alpha-amylase is hormonally regulated. Germinating embryos produce the hormone gibberellic acid, which within 10 hours stimulates the aleurone cells covering the endosperm of the seed to produce alpha-amylase. The enzyme then degrades the starch within the endosperm for use by the developing plant embryo.</text>
</comment>
<comment type="miscellaneous">
    <text>There are at least 4 types of alpha-amylase in barley.</text>
</comment>
<comment type="miscellaneous">
    <text>Mutagenesis experiments indicate that His-117 and His-314 participate in transition state stabilization but not directly in catalysis.</text>
</comment>
<comment type="miscellaneous">
    <text>Binds starch not only at the active site, but also via accessory binding sites on the protein surface that are important for efficient binding to starch granules and thereby increase enzyme activity.</text>
</comment>
<comment type="similarity">
    <text evidence="8">Belongs to the glycosyl hydrolase 13 family.</text>
</comment>
<reference key="1">
    <citation type="journal article" date="1983" name="J. Biol. Chem.">
        <title>Isolation and sequence analysis of a barley alpha-amylase cDNA clone.</title>
        <authorList>
            <person name="Rogers J.C."/>
            <person name="Milliman C."/>
        </authorList>
    </citation>
    <scope>NUCLEOTIDE SEQUENCE [MRNA]</scope>
    <source>
        <strain>cv. Himalaya</strain>
        <tissue>Aleurone</tissue>
    </source>
</reference>
<reference key="2">
    <citation type="journal article" date="1993" name="J. Biol. Chem.">
        <title>Site-directed mutagenesis of histidine 93, aspartic acid 180, glutamic acid 205, histidine 290, and aspartic acid 291 at the active site and tryptophan 279 at the raw starch binding site in barley alpha-amylase 1.</title>
        <authorList>
            <person name="Sogaard M."/>
            <person name="Kadziola A."/>
            <person name="Haser R."/>
            <person name="Svensson B."/>
        </authorList>
    </citation>
    <scope>MUTAGENESIS OF HIS-117; ASP-204; GLU-229; TRP-303; HIS-314 AND ASP-315</scope>
    <scope>CATALYTIC ACTIVITY</scope>
    <scope>ACTIVE SITE</scope>
</reference>
<reference key="3">
    <citation type="journal article" date="2009" name="Biochemistry">
        <title>Two secondary carbohydrate binding sites on the surface of barley alpha-amylase 1 have distinct functions and display synergy in hydrolysis of starch granules.</title>
        <authorList>
            <person name="Nielsen M.M."/>
            <person name="Bozonnet S."/>
            <person name="Seo E.S."/>
            <person name="Motyan J.A."/>
            <person name="Andersen J.M."/>
            <person name="Dilokpimol A."/>
            <person name="Abou Hachem M."/>
            <person name="Gyemant G."/>
            <person name="Naested H."/>
            <person name="Kandra L."/>
            <person name="Sigurskjold B.W."/>
            <person name="Svensson B."/>
        </authorList>
    </citation>
    <scope>MUTAGENESIS OF TRP-302; TRP-303 AND TYR-404</scope>
</reference>
<reference key="4">
    <citation type="journal article" date="2013" name="J. Biol. Chem.">
        <title>Arabidopsis thaliana AMY3 is a unique redox-regulated chloroplastic alpha-amylase.</title>
        <authorList>
            <person name="Seung D."/>
            <person name="Thalmann M."/>
            <person name="Sparla F."/>
            <person name="Abou Hachem M."/>
            <person name="Lee S.K."/>
            <person name="Issakidis-Bourguet E."/>
            <person name="Svensson B."/>
            <person name="Zeeman S.C."/>
            <person name="Santelia D."/>
        </authorList>
    </citation>
    <scope>FUNCTION</scope>
    <scope>CATALYTIC ACTIVITY</scope>
    <scope>BIOPHYSICOCHEMICAL PROPERTIES</scope>
    <scope>ACTIVITY REGULATION</scope>
</reference>
<reference key="5">
    <citation type="journal article" date="2003" name="Structure">
        <title>The structure of barley alpha-amylase isozyme 1 reveals a novel role of domain C in substrate recognition and binding: a pair of sugar tongs.</title>
        <authorList>
            <person name="Robert X."/>
            <person name="Haser R."/>
            <person name="Gottschalk T.E."/>
            <person name="Ratajczak F."/>
            <person name="Driguez H."/>
            <person name="Svensson B."/>
            <person name="Aghajari N."/>
        </authorList>
    </citation>
    <scope>X-RAY CRYSTALLOGRAPHY (1.50 ANGSTROMS) OF 25-428 IN COMPLEX WITH CARBOHYDRATE AND CALCIUM IONS</scope>
    <scope>COFACTOR</scope>
</reference>
<reference key="6">
    <citation type="journal article" date="2005" name="J. Biol. Chem.">
        <title>Oligosaccharide binding to barley alpha-amylase 1.</title>
        <authorList>
            <person name="Robert X."/>
            <person name="Haser R."/>
            <person name="Mori H."/>
            <person name="Svensson B."/>
            <person name="Aghajari N."/>
        </authorList>
    </citation>
    <scope>X-RAY CRYSTALLOGRAPHY (2.00 ANGSTROMS) OF 25-429 IN COMPLEXES WITH CALCIUM IONS; ACARBOSE AND MALTOHEPTAOSE</scope>
    <scope>CATALYTIC ACTIVITY</scope>
    <scope>COFACTOR</scope>
    <scope>MUTAGENESIS OF ASP-204</scope>
</reference>
<reference key="7">
    <citation type="journal article" date="2007" name="FEBS J.">
        <title>The 'pair of sugar tongs' site on the non-catalytic domain C of barley alpha-amylase participates in substrate binding and activity.</title>
        <authorList>
            <person name="Bozonnet S."/>
            <person name="Jensen M.T."/>
            <person name="Nielsen M.M."/>
            <person name="Aghajari N."/>
            <person name="Jensen M.H."/>
            <person name="Kramhoeft B."/>
            <person name="Willemoes M."/>
            <person name="Tranier S."/>
            <person name="Haser R."/>
            <person name="Svensson B."/>
        </authorList>
    </citation>
    <scope>X-RAY CRYSTALLOGRAPHY (1.70 ANGSTROMS) OF 25-429 IN COMPLEX WITH CALCIUM IONS AND ACARBOSE</scope>
    <scope>COFACTOR</scope>
    <scope>MUTAGENESIS OF TYR-404</scope>
</reference>
<reference key="8">
    <citation type="journal article" date="2008" name="FEBS Lett.">
        <title>Multi-site substrate binding and interplay in barley alpha-amylase 1.</title>
        <authorList>
            <person name="Nielsen M.M."/>
            <person name="Seo E.S."/>
            <person name="Bozonnet S."/>
            <person name="Aghajari N."/>
            <person name="Robert X."/>
            <person name="Haser R."/>
            <person name="Svensson B."/>
        </authorList>
    </citation>
    <scope>X-RAY CRYSTALLOGRAPHY (1.95 ANGSTROMS) IN COMPLEXES WITH CALCIUM IONS AND GLUCOSE</scope>
    <scope>CATALYTIC ACTIVITY</scope>
    <scope>COFACTOR</scope>
    <scope>MUTAGENESIS OF TYR-129; TYR-404 AND HIS-419</scope>
</reference>
<keyword id="KW-0002">3D-structure</keyword>
<keyword id="KW-0106">Calcium</keyword>
<keyword id="KW-0119">Carbohydrate metabolism</keyword>
<keyword id="KW-0309">Germination</keyword>
<keyword id="KW-0326">Glycosidase</keyword>
<keyword id="KW-0378">Hydrolase</keyword>
<keyword id="KW-0479">Metal-binding</keyword>
<keyword id="KW-0964">Secreted</keyword>
<keyword id="KW-0732">Signal</keyword>
<dbReference type="EC" id="3.2.1.1" evidence="2 4 6 7"/>
<dbReference type="EMBL" id="J01236">
    <property type="protein sequence ID" value="AAA32929.1"/>
    <property type="molecule type" value="mRNA"/>
</dbReference>
<dbReference type="PIR" id="A00846">
    <property type="entry name" value="ALBH"/>
</dbReference>
<dbReference type="PDB" id="1HT6">
    <property type="method" value="X-ray"/>
    <property type="resolution" value="1.50 A"/>
    <property type="chains" value="A=25-429"/>
</dbReference>
<dbReference type="PDB" id="1P6W">
    <property type="method" value="X-ray"/>
    <property type="resolution" value="2.00 A"/>
    <property type="chains" value="A=25-429"/>
</dbReference>
<dbReference type="PDB" id="1RP8">
    <property type="method" value="X-ray"/>
    <property type="resolution" value="2.00 A"/>
    <property type="chains" value="A=25-429"/>
</dbReference>
<dbReference type="PDB" id="1RP9">
    <property type="method" value="X-ray"/>
    <property type="resolution" value="2.00 A"/>
    <property type="chains" value="A=25-429"/>
</dbReference>
<dbReference type="PDB" id="1RPK">
    <property type="method" value="X-ray"/>
    <property type="resolution" value="2.00 A"/>
    <property type="chains" value="A=25-429"/>
</dbReference>
<dbReference type="PDB" id="2QPS">
    <property type="method" value="X-ray"/>
    <property type="resolution" value="2.20 A"/>
    <property type="chains" value="A=25-429"/>
</dbReference>
<dbReference type="PDB" id="2QPU">
    <property type="method" value="X-ray"/>
    <property type="resolution" value="1.70 A"/>
    <property type="chains" value="A/B/C=25-429"/>
</dbReference>
<dbReference type="PDB" id="3BSG">
    <property type="method" value="X-ray"/>
    <property type="resolution" value="1.95 A"/>
    <property type="chains" value="A=25-438"/>
</dbReference>
<dbReference type="PDB" id="3BSH">
    <property type="method" value="X-ray"/>
    <property type="resolution" value="3.00 A"/>
    <property type="chains" value="A=25-438"/>
</dbReference>
<dbReference type="PDBsum" id="1HT6"/>
<dbReference type="PDBsum" id="1P6W"/>
<dbReference type="PDBsum" id="1RP8"/>
<dbReference type="PDBsum" id="1RP9"/>
<dbReference type="PDBsum" id="1RPK"/>
<dbReference type="PDBsum" id="2QPS"/>
<dbReference type="PDBsum" id="2QPU"/>
<dbReference type="PDBsum" id="3BSG"/>
<dbReference type="PDBsum" id="3BSH"/>
<dbReference type="SMR" id="P00693"/>
<dbReference type="BindingDB" id="P00693"/>
<dbReference type="ChEMBL" id="CHEMBL3616349"/>
<dbReference type="CAZy" id="GH13">
    <property type="family name" value="Glycoside Hydrolase Family 13"/>
</dbReference>
<dbReference type="BRENDA" id="3.2.1.1">
    <property type="organism ID" value="2687"/>
</dbReference>
<dbReference type="EvolutionaryTrace" id="P00693"/>
<dbReference type="ExpressionAtlas" id="P00693">
    <property type="expression patterns" value="baseline and differential"/>
</dbReference>
<dbReference type="GO" id="GO:0005576">
    <property type="term" value="C:extracellular region"/>
    <property type="evidence" value="ECO:0007669"/>
    <property type="project" value="UniProtKB-SubCell"/>
</dbReference>
<dbReference type="GO" id="GO:0004556">
    <property type="term" value="F:alpha-amylase activity"/>
    <property type="evidence" value="ECO:0007669"/>
    <property type="project" value="UniProtKB-EC"/>
</dbReference>
<dbReference type="GO" id="GO:0005509">
    <property type="term" value="F:calcium ion binding"/>
    <property type="evidence" value="ECO:0007669"/>
    <property type="project" value="InterPro"/>
</dbReference>
<dbReference type="GO" id="GO:0005983">
    <property type="term" value="P:starch catabolic process"/>
    <property type="evidence" value="ECO:0007669"/>
    <property type="project" value="UniProtKB-ARBA"/>
</dbReference>
<dbReference type="CDD" id="cd11314">
    <property type="entry name" value="AmyAc_arch_bac_plant_AmyA"/>
    <property type="match status" value="1"/>
</dbReference>
<dbReference type="Gene3D" id="3.20.20.80">
    <property type="entry name" value="Glycosidases"/>
    <property type="match status" value="1"/>
</dbReference>
<dbReference type="Gene3D" id="2.60.40.1180">
    <property type="entry name" value="Golgi alpha-mannosidase II"/>
    <property type="match status" value="1"/>
</dbReference>
<dbReference type="InterPro" id="IPR012850">
    <property type="entry name" value="A-amylase_bs_C"/>
</dbReference>
<dbReference type="InterPro" id="IPR013775">
    <property type="entry name" value="A-amylase_pln"/>
</dbReference>
<dbReference type="InterPro" id="IPR006046">
    <property type="entry name" value="Alpha_amylase"/>
</dbReference>
<dbReference type="InterPro" id="IPR006047">
    <property type="entry name" value="Glyco_hydro_13_cat_dom"/>
</dbReference>
<dbReference type="InterPro" id="IPR013780">
    <property type="entry name" value="Glyco_hydro_b"/>
</dbReference>
<dbReference type="InterPro" id="IPR017853">
    <property type="entry name" value="Glycoside_hydrolase_SF"/>
</dbReference>
<dbReference type="PANTHER" id="PTHR43447">
    <property type="entry name" value="ALPHA-AMYLASE"/>
    <property type="match status" value="1"/>
</dbReference>
<dbReference type="Pfam" id="PF07821">
    <property type="entry name" value="Alpha-amyl_C2"/>
    <property type="match status" value="1"/>
</dbReference>
<dbReference type="Pfam" id="PF00128">
    <property type="entry name" value="Alpha-amylase"/>
    <property type="match status" value="1"/>
</dbReference>
<dbReference type="PIRSF" id="PIRSF001028">
    <property type="entry name" value="Alph-amls_plant"/>
    <property type="match status" value="1"/>
</dbReference>
<dbReference type="PRINTS" id="PR00110">
    <property type="entry name" value="ALPHAAMYLASE"/>
</dbReference>
<dbReference type="SMART" id="SM00642">
    <property type="entry name" value="Aamy"/>
    <property type="match status" value="1"/>
</dbReference>
<dbReference type="SMART" id="SM00810">
    <property type="entry name" value="Alpha-amyl_C2"/>
    <property type="match status" value="1"/>
</dbReference>
<dbReference type="SUPFAM" id="SSF51445">
    <property type="entry name" value="(Trans)glycosidases"/>
    <property type="match status" value="1"/>
</dbReference>
<dbReference type="SUPFAM" id="SSF51011">
    <property type="entry name" value="Glycosyl hydrolase domain"/>
    <property type="match status" value="1"/>
</dbReference>
<organism>
    <name type="scientific">Hordeum vulgare</name>
    <name type="common">Barley</name>
    <dbReference type="NCBI Taxonomy" id="4513"/>
    <lineage>
        <taxon>Eukaryota</taxon>
        <taxon>Viridiplantae</taxon>
        <taxon>Streptophyta</taxon>
        <taxon>Embryophyta</taxon>
        <taxon>Tracheophyta</taxon>
        <taxon>Spermatophyta</taxon>
        <taxon>Magnoliopsida</taxon>
        <taxon>Liliopsida</taxon>
        <taxon>Poales</taxon>
        <taxon>Poaceae</taxon>
        <taxon>BOP clade</taxon>
        <taxon>Pooideae</taxon>
        <taxon>Triticodae</taxon>
        <taxon>Triticeae</taxon>
        <taxon>Hordeinae</taxon>
        <taxon>Hordeum</taxon>
    </lineage>
</organism>
<sequence>MGKNGSLCCFSLLLLLLLAGLASGHQVLFQGFNWESWKQSGGWYNMMMGKVDDIAAAGVTHVWLPPPSHSVSNEGYMPGRLYDIDASKYGNAAELKSLIGALHGKGVQAIADIVINHRCADYKDSRGIYCIFEGGTSDGRLDWGPHMICRDDTKYSDGTANLDTGADFAAAPDIDHLNDRVQRELKEWLLWLKSDLGFDAWRLDFARGYSPEMAKVYIDGTSPSLAVAEVWDNMATGGDGKPNYDQDAHRQNLVNWVDKVGGAASAGMVFDFTTKGILNAAVEGELWRLIDPQGKAPGVMGWWPAKAATFVDNHDTGSTQAMWPFPSDKVMQGYAYILTHPGIPCIFYDHFFNWGFKDQIAALVAIRKRNGITATSALKILMHEGDAYVAEIDGKVVVKIGSRYDVGAVIPAGFVTSAHGNDYAVWEKNGAAATLQRS</sequence>
<feature type="signal peptide">
    <location>
        <begin position="1"/>
        <end position="24"/>
    </location>
</feature>
<feature type="chain" id="PRO_0000001404" description="Alpha-amylase type A isozyme">
    <location>
        <begin position="25"/>
        <end position="438"/>
    </location>
</feature>
<feature type="active site" description="Nucleophile" evidence="10 13">
    <location>
        <position position="204"/>
    </location>
</feature>
<feature type="active site" description="Proton donor" evidence="13">
    <location>
        <position position="229"/>
    </location>
</feature>
<feature type="binding site" evidence="9">
    <location>
        <begin position="69"/>
        <end position="71"/>
    </location>
    <ligand>
        <name>substrate</name>
    </ligand>
</feature>
<feature type="binding site" evidence="10">
    <location>
        <begin position="76"/>
        <end position="77"/>
    </location>
    <ligand>
        <name>substrate</name>
    </ligand>
</feature>
<feature type="binding site" evidence="1 2 3 4">
    <location>
        <position position="116"/>
    </location>
    <ligand>
        <name>Ca(2+)</name>
        <dbReference type="ChEBI" id="CHEBI:29108"/>
        <label>1</label>
    </ligand>
</feature>
<feature type="binding site" evidence="1 2 3 4">
    <location>
        <position position="133"/>
    </location>
    <ligand>
        <name>Ca(2+)</name>
        <dbReference type="ChEBI" id="CHEBI:29108"/>
        <label>2</label>
    </ligand>
</feature>
<feature type="binding site" evidence="1 2 3 4">
    <location>
        <position position="136"/>
    </location>
    <ligand>
        <name>Ca(2+)</name>
        <dbReference type="ChEBI" id="CHEBI:29108"/>
        <label>2</label>
    </ligand>
</feature>
<feature type="binding site" evidence="1 2 3 4">
    <location>
        <position position="138"/>
    </location>
    <ligand>
        <name>Ca(2+)</name>
        <dbReference type="ChEBI" id="CHEBI:29108"/>
        <label>2</label>
    </ligand>
</feature>
<feature type="binding site" evidence="1 2 3 4">
    <location>
        <position position="142"/>
    </location>
    <ligand>
        <name>Ca(2+)</name>
        <dbReference type="ChEBI" id="CHEBI:29108"/>
        <label>2</label>
    </ligand>
</feature>
<feature type="binding site" evidence="1 2 3 4">
    <location>
        <position position="152"/>
    </location>
    <ligand>
        <name>Ca(2+)</name>
        <dbReference type="ChEBI" id="CHEBI:29108"/>
        <label>3</label>
    </ligand>
</feature>
<feature type="binding site" evidence="1 2 3 4">
    <location>
        <position position="163"/>
    </location>
    <ligand>
        <name>Ca(2+)</name>
        <dbReference type="ChEBI" id="CHEBI:29108"/>
        <label>1</label>
    </ligand>
</feature>
<feature type="binding site" evidence="1 2 3 4">
    <location>
        <position position="166"/>
    </location>
    <ligand>
        <name>Ca(2+)</name>
        <dbReference type="ChEBI" id="CHEBI:29108"/>
        <label>1</label>
    </ligand>
</feature>
<feature type="binding site" evidence="1 2 3 4">
    <location>
        <position position="167"/>
    </location>
    <ligand>
        <name>Ca(2+)</name>
        <dbReference type="ChEBI" id="CHEBI:29108"/>
        <label>3</label>
    </ligand>
</feature>
<feature type="binding site" evidence="1 2 3 4">
    <location>
        <position position="168"/>
    </location>
    <ligand>
        <name>Ca(2+)</name>
        <dbReference type="ChEBI" id="CHEBI:29108"/>
        <label>3</label>
    </ligand>
</feature>
<feature type="binding site" evidence="1 2 3 4">
    <location>
        <position position="171"/>
    </location>
    <ligand>
        <name>Ca(2+)</name>
        <dbReference type="ChEBI" id="CHEBI:29108"/>
        <label>3</label>
    </ligand>
</feature>
<feature type="binding site" evidence="1 2 3 4">
    <location>
        <position position="173"/>
    </location>
    <ligand>
        <name>Ca(2+)</name>
        <dbReference type="ChEBI" id="CHEBI:29108"/>
        <label>1</label>
    </ligand>
</feature>
<feature type="binding site" evidence="1 2 3 4">
    <location>
        <position position="173"/>
    </location>
    <ligand>
        <name>Ca(2+)</name>
        <dbReference type="ChEBI" id="CHEBI:29108"/>
        <label>3</label>
    </ligand>
</feature>
<feature type="binding site" evidence="9">
    <location>
        <begin position="202"/>
        <end position="207"/>
    </location>
    <ligand>
        <name>substrate</name>
    </ligand>
</feature>
<feature type="binding site" evidence="1 2 3 4">
    <location>
        <position position="208"/>
    </location>
    <ligand>
        <name>Ca(2+)</name>
        <dbReference type="ChEBI" id="CHEBI:29108"/>
        <label>1</label>
    </ligand>
</feature>
<feature type="binding site" evidence="10">
    <location>
        <position position="231"/>
    </location>
    <ligand>
        <name>substrate</name>
    </ligand>
</feature>
<feature type="binding site" evidence="10">
    <location>
        <position position="233"/>
    </location>
    <ligand>
        <name>substrate</name>
    </ligand>
</feature>
<feature type="binding site" evidence="9 10">
    <location>
        <position position="251"/>
    </location>
    <ligand>
        <name>substrate</name>
    </ligand>
</feature>
<feature type="binding site" evidence="10 11">
    <location>
        <position position="258"/>
    </location>
    <ligand>
        <name>substrate</name>
    </ligand>
</feature>
<feature type="binding site" evidence="10">
    <location>
        <position position="295"/>
    </location>
    <ligand>
        <name>substrate</name>
    </ligand>
</feature>
<feature type="binding site" evidence="9 10">
    <location>
        <begin position="301"/>
        <end position="303"/>
    </location>
    <ligand>
        <name>substrate</name>
    </ligand>
</feature>
<feature type="binding site" evidence="10">
    <location>
        <position position="314"/>
    </location>
    <ligand>
        <name>substrate</name>
    </ligand>
</feature>
<feature type="binding site" evidence="10">
    <location>
        <position position="320"/>
    </location>
    <ligand>
        <name>substrate</name>
    </ligand>
</feature>
<feature type="binding site" evidence="9 10">
    <location>
        <position position="399"/>
    </location>
    <ligand>
        <name>substrate</name>
    </ligand>
</feature>
<feature type="binding site" evidence="9 10 11 12">
    <location>
        <begin position="404"/>
        <end position="406"/>
    </location>
    <ligand>
        <name>substrate</name>
    </ligand>
</feature>
<feature type="binding site" evidence="9 10">
    <location>
        <begin position="416"/>
        <end position="422"/>
    </location>
    <ligand>
        <name>substrate</name>
    </ligand>
</feature>
<feature type="binding site" evidence="10">
    <location>
        <position position="426"/>
    </location>
    <ligand>
        <name>substrate</name>
    </ligand>
</feature>
<feature type="site" description="Transition state stabilizer" evidence="13">
    <location>
        <position position="315"/>
    </location>
</feature>
<feature type="mutagenesis site" description="20-fold decrease in activity." evidence="7">
    <original>H</original>
    <variation>N</variation>
    <location>
        <position position="117"/>
    </location>
</feature>
<feature type="mutagenesis site" description="Reduces affinity for starch granules 3-fold." evidence="4">
    <original>Y</original>
    <variation>A</variation>
    <location>
        <position position="129"/>
    </location>
</feature>
<feature type="mutagenesis site" description="Loss of activity." evidence="2 7">
    <original>D</original>
    <variation>A</variation>
    <variation>N</variation>
    <location>
        <position position="204"/>
    </location>
</feature>
<feature type="mutagenesis site" description="Loss of activity." evidence="7">
    <original>E</original>
    <variation>Q</variation>
    <location>
        <position position="229"/>
    </location>
</feature>
<feature type="mutagenesis site" description="Over 10-fold decrease in affinity for starch granules. Abolishes binding of starch granules and reduces activity towards starch granules by 99%; when associated with A-303 and A-404." evidence="5">
    <original>W</original>
    <variation>A</variation>
    <location>
        <position position="302"/>
    </location>
</feature>
<feature type="mutagenesis site" description="Over 10-fold decrease in affinity for starch granules. Abolishes binding of starch granules and reduces activity towards starch granules by 99%; when associated with A-302 and A-404." evidence="5 7">
    <original>W</original>
    <variation>A</variation>
    <location>
        <position position="303"/>
    </location>
</feature>
<feature type="mutagenesis site" description="10-fold decrease in activity." evidence="7">
    <original>H</original>
    <variation>N</variation>
    <location>
        <position position="314"/>
    </location>
</feature>
<feature type="mutagenesis site" description="Loss of activity." evidence="7">
    <original>D</original>
    <variation>N</variation>
    <location>
        <position position="315"/>
    </location>
</feature>
<feature type="mutagenesis site" description="Reduces affinity for starch granules 9-fold and reduces activity by 90%. Abolishes binding of starch granules and reduces activity towards starch granules by 99%; when associated with A-302 and A-303." evidence="3 4 5">
    <original>Y</original>
    <variation>A</variation>
    <location>
        <position position="404"/>
    </location>
</feature>
<feature type="mutagenesis site" description="Abolishes binding to cyclodextrin-Sepharose and strongly reduces enzyme activity." evidence="3 4 5">
    <original>Y</original>
    <variation>M</variation>
    <location>
        <position position="404"/>
    </location>
</feature>
<feature type="mutagenesis site" description="Slightly decreased catalytic activity." evidence="4">
    <original>H</original>
    <variation>A</variation>
    <location>
        <position position="419"/>
    </location>
</feature>
<feature type="strand" evidence="14">
    <location>
        <begin position="28"/>
        <end position="30"/>
    </location>
</feature>
<feature type="helix" evidence="14">
    <location>
        <begin position="36"/>
        <end position="38"/>
    </location>
</feature>
<feature type="helix" evidence="14">
    <location>
        <begin position="43"/>
        <end position="48"/>
    </location>
</feature>
<feature type="helix" evidence="14">
    <location>
        <begin position="51"/>
        <end position="56"/>
    </location>
</feature>
<feature type="strand" evidence="14">
    <location>
        <begin position="61"/>
        <end position="64"/>
    </location>
</feature>
<feature type="strand" evidence="14">
    <location>
        <begin position="70"/>
        <end position="72"/>
    </location>
</feature>
<feature type="strand" evidence="14">
    <location>
        <begin position="75"/>
        <end position="78"/>
    </location>
</feature>
<feature type="helix" evidence="14">
    <location>
        <begin position="84"/>
        <end position="86"/>
    </location>
</feature>
<feature type="helix" evidence="14">
    <location>
        <begin position="92"/>
        <end position="104"/>
    </location>
</feature>
<feature type="strand" evidence="14">
    <location>
        <begin position="108"/>
        <end position="113"/>
    </location>
</feature>
<feature type="strand" evidence="14">
    <location>
        <begin position="121"/>
        <end position="123"/>
    </location>
</feature>
<feature type="strand" evidence="14">
    <location>
        <begin position="129"/>
        <end position="131"/>
    </location>
</feature>
<feature type="strand" evidence="14">
    <location>
        <begin position="135"/>
        <end position="139"/>
    </location>
</feature>
<feature type="helix" evidence="14">
    <location>
        <begin position="145"/>
        <end position="147"/>
    </location>
</feature>
<feature type="turn" evidence="14">
    <location>
        <begin position="153"/>
        <end position="155"/>
    </location>
</feature>
<feature type="helix" evidence="14">
    <location>
        <begin position="179"/>
        <end position="194"/>
    </location>
</feature>
<feature type="strand" evidence="14">
    <location>
        <begin position="200"/>
        <end position="203"/>
    </location>
</feature>
<feature type="helix" evidence="14">
    <location>
        <begin position="206"/>
        <end position="208"/>
    </location>
</feature>
<feature type="helix" evidence="14">
    <location>
        <begin position="211"/>
        <end position="221"/>
    </location>
</feature>
<feature type="strand" evidence="14">
    <location>
        <begin position="226"/>
        <end position="228"/>
    </location>
</feature>
<feature type="strand" evidence="14">
    <location>
        <begin position="240"/>
        <end position="242"/>
    </location>
</feature>
<feature type="helix" evidence="14">
    <location>
        <begin position="247"/>
        <end position="260"/>
    </location>
</feature>
<feature type="helix" evidence="14">
    <location>
        <begin position="262"/>
        <end position="264"/>
    </location>
</feature>
<feature type="strand" evidence="14">
    <location>
        <begin position="265"/>
        <end position="270"/>
    </location>
</feature>
<feature type="helix" evidence="14">
    <location>
        <begin position="272"/>
        <end position="281"/>
    </location>
</feature>
<feature type="turn" evidence="14">
    <location>
        <begin position="282"/>
        <end position="284"/>
    </location>
</feature>
<feature type="helix" evidence="14">
    <location>
        <begin position="286"/>
        <end position="289"/>
    </location>
</feature>
<feature type="helix" evidence="14">
    <location>
        <begin position="299"/>
        <end position="302"/>
    </location>
</feature>
<feature type="helix" evidence="14">
    <location>
        <begin position="304"/>
        <end position="306"/>
    </location>
</feature>
<feature type="strand" evidence="14">
    <location>
        <begin position="307"/>
        <end position="311"/>
    </location>
</feature>
<feature type="turn" evidence="14">
    <location>
        <begin position="314"/>
        <end position="316"/>
    </location>
</feature>
<feature type="turn" evidence="14">
    <location>
        <begin position="318"/>
        <end position="320"/>
    </location>
</feature>
<feature type="helix" evidence="14">
    <location>
        <begin position="327"/>
        <end position="329"/>
    </location>
</feature>
<feature type="helix" evidence="14">
    <location>
        <begin position="330"/>
        <end position="339"/>
    </location>
</feature>
<feature type="strand" evidence="14">
    <location>
        <begin position="340"/>
        <end position="347"/>
    </location>
</feature>
<feature type="helix" evidence="14">
    <location>
        <begin position="348"/>
        <end position="352"/>
    </location>
</feature>
<feature type="strand" evidence="15">
    <location>
        <begin position="353"/>
        <end position="355"/>
    </location>
</feature>
<feature type="helix" evidence="14">
    <location>
        <begin position="357"/>
        <end position="369"/>
    </location>
</feature>
<feature type="strand" evidence="14">
    <location>
        <begin position="378"/>
        <end position="384"/>
    </location>
</feature>
<feature type="strand" evidence="14">
    <location>
        <begin position="387"/>
        <end position="392"/>
    </location>
</feature>
<feature type="turn" evidence="14">
    <location>
        <begin position="393"/>
        <end position="395"/>
    </location>
</feature>
<feature type="strand" evidence="14">
    <location>
        <begin position="396"/>
        <end position="402"/>
    </location>
</feature>
<feature type="helix" evidence="14">
    <location>
        <begin position="407"/>
        <end position="409"/>
    </location>
</feature>
<feature type="strand" evidence="14">
    <location>
        <begin position="415"/>
        <end position="420"/>
    </location>
</feature>
<feature type="strand" evidence="14">
    <location>
        <begin position="423"/>
        <end position="427"/>
    </location>
</feature>
<proteinExistence type="evidence at protein level"/>
<evidence type="ECO:0000269" key="1">
    <source>
    </source>
</evidence>
<evidence type="ECO:0000269" key="2">
    <source>
    </source>
</evidence>
<evidence type="ECO:0000269" key="3">
    <source>
    </source>
</evidence>
<evidence type="ECO:0000269" key="4">
    <source>
    </source>
</evidence>
<evidence type="ECO:0000269" key="5">
    <source>
    </source>
</evidence>
<evidence type="ECO:0000269" key="6">
    <source>
    </source>
</evidence>
<evidence type="ECO:0000269" key="7">
    <source>
    </source>
</evidence>
<evidence type="ECO:0000305" key="8"/>
<evidence type="ECO:0000305" key="9">
    <source>
    </source>
</evidence>
<evidence type="ECO:0000305" key="10">
    <source>
    </source>
</evidence>
<evidence type="ECO:0000305" key="11">
    <source>
    </source>
</evidence>
<evidence type="ECO:0000305" key="12">
    <source>
    </source>
</evidence>
<evidence type="ECO:0000305" key="13">
    <source>
    </source>
</evidence>
<evidence type="ECO:0007829" key="14">
    <source>
        <dbReference type="PDB" id="1HT6"/>
    </source>
</evidence>
<evidence type="ECO:0007829" key="15">
    <source>
        <dbReference type="PDB" id="3BSH"/>
    </source>
</evidence>
<gene>
    <name type="primary">AMY1.1</name>
</gene>